<accession>Q6NX08</accession>
<accession>Q803T7</accession>
<comment type="function">
    <text evidence="1">Component of the PeBoW complex, which is required for maturation of 28S and 5.8S ribosomal RNAs and formation of the 60S ribosome.</text>
</comment>
<comment type="subunit">
    <text evidence="1">Component of the PeBoW complex, composed of bop1, pes1 and wdr12. The complex is held together by bop1, which interacts with pes1 via its N-terminal domain and with wdr12 via a high-affinity interaction between the seven-bladed beta-propeller domains of the 2 proteins. The PeBoW complex associates with the 66S pre-ribosome. Interacts (via UBL domain) with mdn1 (via VWFA/MIDAS domain).</text>
</comment>
<comment type="subcellular location">
    <subcellularLocation>
        <location evidence="1">Nucleus</location>
        <location evidence="1">Nucleolus</location>
    </subcellularLocation>
    <subcellularLocation>
        <location evidence="1">Nucleus</location>
        <location evidence="1">Nucleoplasm</location>
    </subcellularLocation>
</comment>
<comment type="similarity">
    <text evidence="1">Belongs to the WD repeat WDR12/YTM1 family.</text>
</comment>
<evidence type="ECO:0000255" key="1">
    <source>
        <dbReference type="HAMAP-Rule" id="MF_03029"/>
    </source>
</evidence>
<evidence type="ECO:0000256" key="2">
    <source>
        <dbReference type="SAM" id="MobiDB-lite"/>
    </source>
</evidence>
<evidence type="ECO:0000305" key="3"/>
<protein>
    <recommendedName>
        <fullName evidence="1">Ribosome biogenesis protein wdr12</fullName>
    </recommendedName>
    <alternativeName>
        <fullName evidence="1">WD repeat-containing protein 12</fullName>
    </alternativeName>
</protein>
<sequence length="422" mass="47281">MSQLQARFFTENKKYLVDDVPFSIPASSEVADLSGVINKLLEAKNAGHKHVEFDFLVRGQFLRTSLDKHIETENISTEEVVEIEYVEKFTAPQPEECIMHDDWISSVEADSEWILTGSYDKTARIWSMEGKAVMTVAGHADVVKDVAWVKRDGLNSVLLTASLDQTVMLWEWNSERNKVKARHCCRGHAGSVDTIAVDPTRTKFCSGSWDKMLKIWSAVPTEEEDEIEEPNRPRKKQKTEQMGLTRTPLMTLSGHNEAVSSVLWMDADELCSASWDHTIRLWDAETGGQKSTLSGSKVFNCISYSPLCRRLASGSTDRHVRLWDPRSKDGSLVLLSLTSHNGWVTAVRWAPSHEHQLVSGSLDNVVKLWDTRSCKAPLYDLAAHEDKVLCADWTENGLILSGGADNKLYTYRYAACVSDAGA</sequence>
<keyword id="KW-0539">Nucleus</keyword>
<keyword id="KW-1185">Reference proteome</keyword>
<keyword id="KW-0677">Repeat</keyword>
<keyword id="KW-0690">Ribosome biogenesis</keyword>
<keyword id="KW-0698">rRNA processing</keyword>
<keyword id="KW-0853">WD repeat</keyword>
<feature type="chain" id="PRO_0000354081" description="Ribosome biogenesis protein wdr12">
    <location>
        <begin position="1"/>
        <end position="422"/>
    </location>
</feature>
<feature type="repeat" description="WD 1">
    <location>
        <begin position="99"/>
        <end position="136"/>
    </location>
</feature>
<feature type="repeat" description="WD 2">
    <location>
        <begin position="138"/>
        <end position="180"/>
    </location>
</feature>
<feature type="repeat" description="WD 3">
    <location>
        <begin position="187"/>
        <end position="226"/>
    </location>
</feature>
<feature type="repeat" description="WD 4">
    <location>
        <begin position="254"/>
        <end position="292"/>
    </location>
</feature>
<feature type="repeat" description="WD 5">
    <location>
        <begin position="294"/>
        <end position="333"/>
    </location>
</feature>
<feature type="repeat" description="WD 6">
    <location>
        <begin position="339"/>
        <end position="379"/>
    </location>
</feature>
<feature type="repeat" description="WD 7">
    <location>
        <begin position="383"/>
        <end position="421"/>
    </location>
</feature>
<feature type="region of interest" description="Ubiquitin-like (UBL) domain" evidence="1">
    <location>
        <begin position="4"/>
        <end position="87"/>
    </location>
</feature>
<feature type="region of interest" description="Disordered" evidence="2">
    <location>
        <begin position="220"/>
        <end position="243"/>
    </location>
</feature>
<feature type="sequence conflict" description="In Ref. 1; AAH44198." evidence="3" ref="1">
    <original>N</original>
    <variation>D</variation>
    <location>
        <position position="231"/>
    </location>
</feature>
<reference key="1">
    <citation type="submission" date="2007-11" db="EMBL/GenBank/DDBJ databases">
        <authorList>
            <consortium name="NIH - Zebrafish Gene Collection (ZGC) project"/>
        </authorList>
    </citation>
    <scope>NUCLEOTIDE SEQUENCE [LARGE SCALE MRNA]</scope>
    <source>
        <strain>AB</strain>
        <tissue>Embryo</tissue>
    </source>
</reference>
<proteinExistence type="evidence at transcript level"/>
<dbReference type="EMBL" id="BC044198">
    <property type="protein sequence ID" value="AAH44198.1"/>
    <property type="molecule type" value="mRNA"/>
</dbReference>
<dbReference type="EMBL" id="BC067331">
    <property type="protein sequence ID" value="AAH67331.1"/>
    <property type="molecule type" value="mRNA"/>
</dbReference>
<dbReference type="EMBL" id="BC155268">
    <property type="protein sequence ID" value="AAI55269.1"/>
    <property type="molecule type" value="mRNA"/>
</dbReference>
<dbReference type="RefSeq" id="NP_955851.1">
    <property type="nucleotide sequence ID" value="NM_199557.1"/>
</dbReference>
<dbReference type="SMR" id="Q6NX08"/>
<dbReference type="FunCoup" id="Q6NX08">
    <property type="interactions" value="1617"/>
</dbReference>
<dbReference type="STRING" id="7955.ENSDARP00000004327"/>
<dbReference type="PaxDb" id="7955-ENSDARP00000004327"/>
<dbReference type="DNASU" id="321652"/>
<dbReference type="Ensembl" id="ENSDART00000012903">
    <property type="protein sequence ID" value="ENSDARP00000004327"/>
    <property type="gene ID" value="ENSDARG00000003287"/>
</dbReference>
<dbReference type="GeneID" id="321652"/>
<dbReference type="KEGG" id="dre:321652"/>
<dbReference type="AGR" id="ZFIN:ZDB-GENE-030131-371"/>
<dbReference type="CTD" id="55759"/>
<dbReference type="ZFIN" id="ZDB-GENE-030131-371">
    <property type="gene designation" value="wdr12"/>
</dbReference>
<dbReference type="eggNOG" id="KOG0313">
    <property type="taxonomic scope" value="Eukaryota"/>
</dbReference>
<dbReference type="HOGENOM" id="CLU_000288_57_0_1"/>
<dbReference type="InParanoid" id="Q6NX08"/>
<dbReference type="OMA" id="DHKYVEF"/>
<dbReference type="OrthoDB" id="10251381at2759"/>
<dbReference type="PhylomeDB" id="Q6NX08"/>
<dbReference type="TreeFam" id="TF313023"/>
<dbReference type="PRO" id="PR:Q6NX08"/>
<dbReference type="Proteomes" id="UP000000437">
    <property type="component" value="Chromosome 6"/>
</dbReference>
<dbReference type="Bgee" id="ENSDARG00000003287">
    <property type="expression patterns" value="Expressed in somite and 42 other cell types or tissues"/>
</dbReference>
<dbReference type="GO" id="GO:0005730">
    <property type="term" value="C:nucleolus"/>
    <property type="evidence" value="ECO:0000250"/>
    <property type="project" value="UniProtKB"/>
</dbReference>
<dbReference type="GO" id="GO:0005654">
    <property type="term" value="C:nucleoplasm"/>
    <property type="evidence" value="ECO:0000250"/>
    <property type="project" value="UniProtKB"/>
</dbReference>
<dbReference type="GO" id="GO:0070545">
    <property type="term" value="C:PeBoW complex"/>
    <property type="evidence" value="ECO:0000250"/>
    <property type="project" value="UniProtKB"/>
</dbReference>
<dbReference type="GO" id="GO:0030687">
    <property type="term" value="C:preribosome, large subunit precursor"/>
    <property type="evidence" value="ECO:0000250"/>
    <property type="project" value="UniProtKB"/>
</dbReference>
<dbReference type="GO" id="GO:0043021">
    <property type="term" value="F:ribonucleoprotein complex binding"/>
    <property type="evidence" value="ECO:0007669"/>
    <property type="project" value="UniProtKB-UniRule"/>
</dbReference>
<dbReference type="GO" id="GO:0000466">
    <property type="term" value="P:maturation of 5.8S rRNA from tricistronic rRNA transcript (SSU-rRNA, 5.8S rRNA, LSU-rRNA)"/>
    <property type="evidence" value="ECO:0000250"/>
    <property type="project" value="UniProtKB"/>
</dbReference>
<dbReference type="GO" id="GO:0000463">
    <property type="term" value="P:maturation of LSU-rRNA from tricistronic rRNA transcript (SSU-rRNA, 5.8S rRNA, LSU-rRNA)"/>
    <property type="evidence" value="ECO:0000250"/>
    <property type="project" value="UniProtKB"/>
</dbReference>
<dbReference type="GO" id="GO:0051726">
    <property type="term" value="P:regulation of cell cycle"/>
    <property type="evidence" value="ECO:0000250"/>
    <property type="project" value="UniProtKB"/>
</dbReference>
<dbReference type="CDD" id="cd00200">
    <property type="entry name" value="WD40"/>
    <property type="match status" value="1"/>
</dbReference>
<dbReference type="FunFam" id="2.130.10.10:FF:000272">
    <property type="entry name" value="Ribosome biogenesis protein WDR12"/>
    <property type="match status" value="1"/>
</dbReference>
<dbReference type="Gene3D" id="2.130.10.10">
    <property type="entry name" value="YVTN repeat-like/Quinoprotein amine dehydrogenase"/>
    <property type="match status" value="1"/>
</dbReference>
<dbReference type="HAMAP" id="MF_03029">
    <property type="entry name" value="WDR12"/>
    <property type="match status" value="1"/>
</dbReference>
<dbReference type="InterPro" id="IPR020472">
    <property type="entry name" value="G-protein_beta_WD-40_rep"/>
</dbReference>
<dbReference type="InterPro" id="IPR012972">
    <property type="entry name" value="NLE"/>
</dbReference>
<dbReference type="InterPro" id="IPR015943">
    <property type="entry name" value="WD40/YVTN_repeat-like_dom_sf"/>
</dbReference>
<dbReference type="InterPro" id="IPR019775">
    <property type="entry name" value="WD40_repeat_CS"/>
</dbReference>
<dbReference type="InterPro" id="IPR036322">
    <property type="entry name" value="WD40_repeat_dom_sf"/>
</dbReference>
<dbReference type="InterPro" id="IPR001680">
    <property type="entry name" value="WD40_rpt"/>
</dbReference>
<dbReference type="InterPro" id="IPR028599">
    <property type="entry name" value="WDR12/Ytm1"/>
</dbReference>
<dbReference type="PANTHER" id="PTHR19855:SF11">
    <property type="entry name" value="RIBOSOME BIOGENESIS PROTEIN WDR12"/>
    <property type="match status" value="1"/>
</dbReference>
<dbReference type="PANTHER" id="PTHR19855">
    <property type="entry name" value="WD40 REPEAT PROTEIN 12, 37"/>
    <property type="match status" value="1"/>
</dbReference>
<dbReference type="Pfam" id="PF08154">
    <property type="entry name" value="NLE"/>
    <property type="match status" value="1"/>
</dbReference>
<dbReference type="Pfam" id="PF00400">
    <property type="entry name" value="WD40"/>
    <property type="match status" value="7"/>
</dbReference>
<dbReference type="PRINTS" id="PR00320">
    <property type="entry name" value="GPROTEINBRPT"/>
</dbReference>
<dbReference type="SMART" id="SM00320">
    <property type="entry name" value="WD40"/>
    <property type="match status" value="7"/>
</dbReference>
<dbReference type="SUPFAM" id="SSF50978">
    <property type="entry name" value="WD40 repeat-like"/>
    <property type="match status" value="1"/>
</dbReference>
<dbReference type="PROSITE" id="PS00678">
    <property type="entry name" value="WD_REPEATS_1"/>
    <property type="match status" value="2"/>
</dbReference>
<dbReference type="PROSITE" id="PS50082">
    <property type="entry name" value="WD_REPEATS_2"/>
    <property type="match status" value="6"/>
</dbReference>
<dbReference type="PROSITE" id="PS50294">
    <property type="entry name" value="WD_REPEATS_REGION"/>
    <property type="match status" value="1"/>
</dbReference>
<organism>
    <name type="scientific">Danio rerio</name>
    <name type="common">Zebrafish</name>
    <name type="synonym">Brachydanio rerio</name>
    <dbReference type="NCBI Taxonomy" id="7955"/>
    <lineage>
        <taxon>Eukaryota</taxon>
        <taxon>Metazoa</taxon>
        <taxon>Chordata</taxon>
        <taxon>Craniata</taxon>
        <taxon>Vertebrata</taxon>
        <taxon>Euteleostomi</taxon>
        <taxon>Actinopterygii</taxon>
        <taxon>Neopterygii</taxon>
        <taxon>Teleostei</taxon>
        <taxon>Ostariophysi</taxon>
        <taxon>Cypriniformes</taxon>
        <taxon>Danionidae</taxon>
        <taxon>Danioninae</taxon>
        <taxon>Danio</taxon>
    </lineage>
</organism>
<name>WDR12_DANRE</name>
<gene>
    <name type="primary">wdr12</name>
</gene>